<protein>
    <recommendedName>
        <fullName evidence="1">Probable Fe(2+)-trafficking protein</fullName>
    </recommendedName>
</protein>
<keyword id="KW-0408">Iron</keyword>
<keyword id="KW-1185">Reference proteome</keyword>
<proteinExistence type="inferred from homology"/>
<dbReference type="EMBL" id="CP000010">
    <property type="protein sequence ID" value="AAU48201.1"/>
    <property type="molecule type" value="Genomic_DNA"/>
</dbReference>
<dbReference type="RefSeq" id="WP_004193961.1">
    <property type="nucleotide sequence ID" value="NC_006348.1"/>
</dbReference>
<dbReference type="RefSeq" id="YP_103370.1">
    <property type="nucleotide sequence ID" value="NC_006348.1"/>
</dbReference>
<dbReference type="SMR" id="Q62IU9"/>
<dbReference type="KEGG" id="bma:BMA1752"/>
<dbReference type="PATRIC" id="fig|243160.12.peg.1795"/>
<dbReference type="eggNOG" id="COG2924">
    <property type="taxonomic scope" value="Bacteria"/>
</dbReference>
<dbReference type="HOGENOM" id="CLU_170994_0_0_4"/>
<dbReference type="Proteomes" id="UP000006693">
    <property type="component" value="Chromosome 1"/>
</dbReference>
<dbReference type="GO" id="GO:0005829">
    <property type="term" value="C:cytosol"/>
    <property type="evidence" value="ECO:0007669"/>
    <property type="project" value="TreeGrafter"/>
</dbReference>
<dbReference type="GO" id="GO:0005506">
    <property type="term" value="F:iron ion binding"/>
    <property type="evidence" value="ECO:0007669"/>
    <property type="project" value="UniProtKB-UniRule"/>
</dbReference>
<dbReference type="GO" id="GO:0034599">
    <property type="term" value="P:cellular response to oxidative stress"/>
    <property type="evidence" value="ECO:0007669"/>
    <property type="project" value="TreeGrafter"/>
</dbReference>
<dbReference type="FunFam" id="1.10.3880.10:FF:000001">
    <property type="entry name" value="Probable Fe(2+)-trafficking protein"/>
    <property type="match status" value="1"/>
</dbReference>
<dbReference type="Gene3D" id="1.10.3880.10">
    <property type="entry name" value="Fe(II) trafficking protein YggX"/>
    <property type="match status" value="1"/>
</dbReference>
<dbReference type="HAMAP" id="MF_00686">
    <property type="entry name" value="Fe_traffic_YggX"/>
    <property type="match status" value="1"/>
</dbReference>
<dbReference type="InterPro" id="IPR007457">
    <property type="entry name" value="Fe_traffick_prot_YggX"/>
</dbReference>
<dbReference type="InterPro" id="IPR036766">
    <property type="entry name" value="Fe_traffick_prot_YggX_sf"/>
</dbReference>
<dbReference type="NCBIfam" id="NF003817">
    <property type="entry name" value="PRK05408.1"/>
    <property type="match status" value="1"/>
</dbReference>
<dbReference type="PANTHER" id="PTHR36965">
    <property type="entry name" value="FE(2+)-TRAFFICKING PROTEIN-RELATED"/>
    <property type="match status" value="1"/>
</dbReference>
<dbReference type="PANTHER" id="PTHR36965:SF1">
    <property type="entry name" value="FE(2+)-TRAFFICKING PROTEIN-RELATED"/>
    <property type="match status" value="1"/>
</dbReference>
<dbReference type="Pfam" id="PF04362">
    <property type="entry name" value="Iron_traffic"/>
    <property type="match status" value="1"/>
</dbReference>
<dbReference type="PIRSF" id="PIRSF029827">
    <property type="entry name" value="Fe_traffic_YggX"/>
    <property type="match status" value="1"/>
</dbReference>
<dbReference type="SUPFAM" id="SSF111148">
    <property type="entry name" value="YggX-like"/>
    <property type="match status" value="1"/>
</dbReference>
<feature type="chain" id="PRO_0000214473" description="Probable Fe(2+)-trafficking protein">
    <location>
        <begin position="1"/>
        <end position="91"/>
    </location>
</feature>
<name>FETP_BURMA</name>
<sequence length="91" mass="10376">MARMIHCAKLGKEAEGLDFPPLPGELGKRLYESVSKQAWQDWLKQQTMLINENRLNMADPRARQYLMKQTEKYFFGEGADQASGYVPPAQG</sequence>
<accession>Q62IU9</accession>
<gene>
    <name type="ordered locus">BMA1752</name>
</gene>
<comment type="function">
    <text evidence="1">Could be a mediator in iron transactions between iron acquisition and iron-requiring processes, such as synthesis and/or repair of Fe-S clusters in biosynthetic enzymes.</text>
</comment>
<comment type="similarity">
    <text evidence="1">Belongs to the Fe(2+)-trafficking protein family.</text>
</comment>
<evidence type="ECO:0000255" key="1">
    <source>
        <dbReference type="HAMAP-Rule" id="MF_00686"/>
    </source>
</evidence>
<reference key="1">
    <citation type="journal article" date="2004" name="Proc. Natl. Acad. Sci. U.S.A.">
        <title>Structural flexibility in the Burkholderia mallei genome.</title>
        <authorList>
            <person name="Nierman W.C."/>
            <person name="DeShazer D."/>
            <person name="Kim H.S."/>
            <person name="Tettelin H."/>
            <person name="Nelson K.E."/>
            <person name="Feldblyum T.V."/>
            <person name="Ulrich R.L."/>
            <person name="Ronning C.M."/>
            <person name="Brinkac L.M."/>
            <person name="Daugherty S.C."/>
            <person name="Davidsen T.D."/>
            <person name="DeBoy R.T."/>
            <person name="Dimitrov G."/>
            <person name="Dodson R.J."/>
            <person name="Durkin A.S."/>
            <person name="Gwinn M.L."/>
            <person name="Haft D.H."/>
            <person name="Khouri H.M."/>
            <person name="Kolonay J.F."/>
            <person name="Madupu R."/>
            <person name="Mohammoud Y."/>
            <person name="Nelson W.C."/>
            <person name="Radune D."/>
            <person name="Romero C.M."/>
            <person name="Sarria S."/>
            <person name="Selengut J."/>
            <person name="Shamblin C."/>
            <person name="Sullivan S.A."/>
            <person name="White O."/>
            <person name="Yu Y."/>
            <person name="Zafar N."/>
            <person name="Zhou L."/>
            <person name="Fraser C.M."/>
        </authorList>
    </citation>
    <scope>NUCLEOTIDE SEQUENCE [LARGE SCALE GENOMIC DNA]</scope>
    <source>
        <strain>ATCC 23344</strain>
    </source>
</reference>
<organism>
    <name type="scientific">Burkholderia mallei (strain ATCC 23344)</name>
    <dbReference type="NCBI Taxonomy" id="243160"/>
    <lineage>
        <taxon>Bacteria</taxon>
        <taxon>Pseudomonadati</taxon>
        <taxon>Pseudomonadota</taxon>
        <taxon>Betaproteobacteria</taxon>
        <taxon>Burkholderiales</taxon>
        <taxon>Burkholderiaceae</taxon>
        <taxon>Burkholderia</taxon>
        <taxon>pseudomallei group</taxon>
    </lineage>
</organism>